<reference key="1">
    <citation type="journal article" date="1997" name="Nature">
        <title>The nucleotide sequence of Saccharomyces cerevisiae chromosome IV.</title>
        <authorList>
            <person name="Jacq C."/>
            <person name="Alt-Moerbe J."/>
            <person name="Andre B."/>
            <person name="Arnold W."/>
            <person name="Bahr A."/>
            <person name="Ballesta J.P.G."/>
            <person name="Bargues M."/>
            <person name="Baron L."/>
            <person name="Becker A."/>
            <person name="Biteau N."/>
            <person name="Bloecker H."/>
            <person name="Blugeon C."/>
            <person name="Boskovic J."/>
            <person name="Brandt P."/>
            <person name="Brueckner M."/>
            <person name="Buitrago M.J."/>
            <person name="Coster F."/>
            <person name="Delaveau T."/>
            <person name="del Rey F."/>
            <person name="Dujon B."/>
            <person name="Eide L.G."/>
            <person name="Garcia-Cantalejo J.M."/>
            <person name="Goffeau A."/>
            <person name="Gomez-Peris A."/>
            <person name="Granotier C."/>
            <person name="Hanemann V."/>
            <person name="Hankeln T."/>
            <person name="Hoheisel J.D."/>
            <person name="Jaeger W."/>
            <person name="Jimenez A."/>
            <person name="Jonniaux J.-L."/>
            <person name="Kraemer C."/>
            <person name="Kuester H."/>
            <person name="Laamanen P."/>
            <person name="Legros Y."/>
            <person name="Louis E.J."/>
            <person name="Moeller-Rieker S."/>
            <person name="Monnet A."/>
            <person name="Moro M."/>
            <person name="Mueller-Auer S."/>
            <person name="Nussbaumer B."/>
            <person name="Paricio N."/>
            <person name="Paulin L."/>
            <person name="Perea J."/>
            <person name="Perez-Alonso M."/>
            <person name="Perez-Ortin J.E."/>
            <person name="Pohl T.M."/>
            <person name="Prydz H."/>
            <person name="Purnelle B."/>
            <person name="Rasmussen S.W."/>
            <person name="Remacha M.A."/>
            <person name="Revuelta J.L."/>
            <person name="Rieger M."/>
            <person name="Salom D."/>
            <person name="Saluz H.P."/>
            <person name="Saiz J.E."/>
            <person name="Saren A.-M."/>
            <person name="Schaefer M."/>
            <person name="Scharfe M."/>
            <person name="Schmidt E.R."/>
            <person name="Schneider C."/>
            <person name="Scholler P."/>
            <person name="Schwarz S."/>
            <person name="Soler-Mira A."/>
            <person name="Urrestarazu L.A."/>
            <person name="Verhasselt P."/>
            <person name="Vissers S."/>
            <person name="Voet M."/>
            <person name="Volckaert G."/>
            <person name="Wagner G."/>
            <person name="Wambutt R."/>
            <person name="Wedler E."/>
            <person name="Wedler H."/>
            <person name="Woelfl S."/>
            <person name="Harris D.E."/>
            <person name="Bowman S."/>
            <person name="Brown D."/>
            <person name="Churcher C.M."/>
            <person name="Connor R."/>
            <person name="Dedman K."/>
            <person name="Gentles S."/>
            <person name="Hamlin N."/>
            <person name="Hunt S."/>
            <person name="Jones L."/>
            <person name="McDonald S."/>
            <person name="Murphy L.D."/>
            <person name="Niblett D."/>
            <person name="Odell C."/>
            <person name="Oliver K."/>
            <person name="Rajandream M.A."/>
            <person name="Richards C."/>
            <person name="Shore L."/>
            <person name="Walsh S.V."/>
            <person name="Barrell B.G."/>
            <person name="Dietrich F.S."/>
            <person name="Mulligan J.T."/>
            <person name="Allen E."/>
            <person name="Araujo R."/>
            <person name="Aviles E."/>
            <person name="Berno A."/>
            <person name="Carpenter J."/>
            <person name="Chen E."/>
            <person name="Cherry J.M."/>
            <person name="Chung E."/>
            <person name="Duncan M."/>
            <person name="Hunicke-Smith S."/>
            <person name="Hyman R.W."/>
            <person name="Komp C."/>
            <person name="Lashkari D."/>
            <person name="Lew H."/>
            <person name="Lin D."/>
            <person name="Mosedale D."/>
            <person name="Nakahara K."/>
            <person name="Namath A."/>
            <person name="Oefner P."/>
            <person name="Oh C."/>
            <person name="Petel F.X."/>
            <person name="Roberts D."/>
            <person name="Schramm S."/>
            <person name="Schroeder M."/>
            <person name="Shogren T."/>
            <person name="Shroff N."/>
            <person name="Winant A."/>
            <person name="Yelton M.A."/>
            <person name="Botstein D."/>
            <person name="Davis R.W."/>
            <person name="Johnston M."/>
            <person name="Andrews S."/>
            <person name="Brinkman R."/>
            <person name="Cooper J."/>
            <person name="Ding H."/>
            <person name="Du Z."/>
            <person name="Favello A."/>
            <person name="Fulton L."/>
            <person name="Gattung S."/>
            <person name="Greco T."/>
            <person name="Hallsworth K."/>
            <person name="Hawkins J."/>
            <person name="Hillier L.W."/>
            <person name="Jier M."/>
            <person name="Johnson D."/>
            <person name="Johnston L."/>
            <person name="Kirsten J."/>
            <person name="Kucaba T."/>
            <person name="Langston Y."/>
            <person name="Latreille P."/>
            <person name="Le T."/>
            <person name="Mardis E."/>
            <person name="Menezes S."/>
            <person name="Miller N."/>
            <person name="Nhan M."/>
            <person name="Pauley A."/>
            <person name="Peluso D."/>
            <person name="Rifkin L."/>
            <person name="Riles L."/>
            <person name="Taich A."/>
            <person name="Trevaskis E."/>
            <person name="Vignati D."/>
            <person name="Wilcox L."/>
            <person name="Wohldman P."/>
            <person name="Vaudin M."/>
            <person name="Wilson R."/>
            <person name="Waterston R."/>
            <person name="Albermann K."/>
            <person name="Hani J."/>
            <person name="Heumann K."/>
            <person name="Kleine K."/>
            <person name="Mewes H.-W."/>
            <person name="Zollner A."/>
            <person name="Zaccaria P."/>
        </authorList>
    </citation>
    <scope>NUCLEOTIDE SEQUENCE [LARGE SCALE GENOMIC DNA]</scope>
    <source>
        <strain>ATCC 204508 / S288c</strain>
    </source>
</reference>
<reference key="2">
    <citation type="journal article" date="2014" name="G3 (Bethesda)">
        <title>The reference genome sequence of Saccharomyces cerevisiae: Then and now.</title>
        <authorList>
            <person name="Engel S.R."/>
            <person name="Dietrich F.S."/>
            <person name="Fisk D.G."/>
            <person name="Binkley G."/>
            <person name="Balakrishnan R."/>
            <person name="Costanzo M.C."/>
            <person name="Dwight S.S."/>
            <person name="Hitz B.C."/>
            <person name="Karra K."/>
            <person name="Nash R.S."/>
            <person name="Weng S."/>
            <person name="Wong E.D."/>
            <person name="Lloyd P."/>
            <person name="Skrzypek M.S."/>
            <person name="Miyasato S.R."/>
            <person name="Simison M."/>
            <person name="Cherry J.M."/>
        </authorList>
    </citation>
    <scope>GENOME REANNOTATION</scope>
    <source>
        <strain>ATCC 204508 / S288c</strain>
    </source>
</reference>
<reference key="3">
    <citation type="journal article" date="2003" name="Nature">
        <title>Global analysis of protein localization in budding yeast.</title>
        <authorList>
            <person name="Huh W.-K."/>
            <person name="Falvo J.V."/>
            <person name="Gerke L.C."/>
            <person name="Carroll A.S."/>
            <person name="Howson R.W."/>
            <person name="Weissman J.S."/>
            <person name="O'Shea E.K."/>
        </authorList>
    </citation>
    <scope>SUBCELLULAR LOCATION [LARGE SCALE ANALYSIS]</scope>
</reference>
<reference key="4">
    <citation type="journal article" date="2003" name="Nature">
        <title>Global analysis of protein expression in yeast.</title>
        <authorList>
            <person name="Ghaemmaghami S."/>
            <person name="Huh W.-K."/>
            <person name="Bower K."/>
            <person name="Howson R.W."/>
            <person name="Belle A."/>
            <person name="Dephoure N."/>
            <person name="O'Shea E.K."/>
            <person name="Weissman J.S."/>
        </authorList>
    </citation>
    <scope>LEVEL OF PROTEIN EXPRESSION [LARGE SCALE ANALYSIS]</scope>
</reference>
<reference key="5">
    <citation type="journal article" date="2006" name="J. Biol. Chem.">
        <title>Yeast GTB1 encodes a subunit of glucosidase II required for glycoprotein processing in the endoplasmic reticulum.</title>
        <authorList>
            <person name="Wilkinson B.M."/>
            <person name="Purswani J."/>
            <person name="Stirling C.J."/>
        </authorList>
    </citation>
    <scope>FUNCTION</scope>
    <scope>INTERACTION WITH ROT2</scope>
    <scope>SUBCELLULAR LOCATION</scope>
    <scope>GLYCOSYLATION</scope>
</reference>
<proteinExistence type="evidence at protein level"/>
<keyword id="KW-0175">Coiled coil</keyword>
<keyword id="KW-1015">Disulfide bond</keyword>
<keyword id="KW-0256">Endoplasmic reticulum</keyword>
<keyword id="KW-0325">Glycoprotein</keyword>
<keyword id="KW-1185">Reference proteome</keyword>
<keyword id="KW-0732">Signal</keyword>
<feature type="signal peptide" evidence="1">
    <location>
        <begin position="1"/>
        <end position="20"/>
    </location>
</feature>
<feature type="chain" id="PRO_0000245572" description="Glucosidase 2 subunit beta">
    <location>
        <begin position="21"/>
        <end position="702"/>
    </location>
</feature>
<feature type="domain" description="MRH" evidence="2">
    <location>
        <begin position="537"/>
        <end position="689"/>
    </location>
</feature>
<feature type="region of interest" description="Disordered" evidence="3">
    <location>
        <begin position="435"/>
        <end position="457"/>
    </location>
</feature>
<feature type="coiled-coil region" evidence="1">
    <location>
        <begin position="163"/>
        <end position="228"/>
    </location>
</feature>
<feature type="coiled-coil region" evidence="1">
    <location>
        <begin position="478"/>
        <end position="517"/>
    </location>
</feature>
<feature type="glycosylation site" description="N-linked (GlcNAc...) asparagine" evidence="1">
    <location>
        <position position="145"/>
    </location>
</feature>
<feature type="glycosylation site" description="N-linked (GlcNAc...) asparagine" evidence="1">
    <location>
        <position position="240"/>
    </location>
</feature>
<feature type="glycosylation site" description="N-linked (GlcNAc...) asparagine" evidence="1">
    <location>
        <position position="358"/>
    </location>
</feature>
<feature type="glycosylation site" description="N-linked (GlcNAc...) asparagine" evidence="1">
    <location>
        <position position="520"/>
    </location>
</feature>
<feature type="glycosylation site" description="N-linked (GlcNAc...) asparagine" evidence="1">
    <location>
        <position position="525"/>
    </location>
</feature>
<feature type="glycosylation site" description="N-linked (GlcNAc...) asparagine" evidence="1">
    <location>
        <position position="688"/>
    </location>
</feature>
<feature type="glycosylation site" description="N-linked (GlcNAc...) asparagine" evidence="1">
    <location>
        <position position="699"/>
    </location>
</feature>
<feature type="disulfide bond" evidence="2">
    <location>
        <begin position="539"/>
        <end position="552"/>
    </location>
</feature>
<feature type="disulfide bond" evidence="2">
    <location>
        <begin position="646"/>
        <end position="675"/>
    </location>
</feature>
<feature type="disulfide bond" evidence="2">
    <location>
        <begin position="660"/>
        <end position="687"/>
    </location>
</feature>
<evidence type="ECO:0000255" key="1"/>
<evidence type="ECO:0000255" key="2">
    <source>
        <dbReference type="PROSITE-ProRule" id="PRU01262"/>
    </source>
</evidence>
<evidence type="ECO:0000256" key="3">
    <source>
        <dbReference type="SAM" id="MobiDB-lite"/>
    </source>
</evidence>
<evidence type="ECO:0000269" key="4">
    <source>
    </source>
</evidence>
<evidence type="ECO:0000269" key="5">
    <source>
    </source>
</evidence>
<evidence type="ECO:0000269" key="6">
    <source>
    </source>
</evidence>
<comment type="function">
    <text evidence="6">Subunit of glucosidase 2, which cleaves sequentially the 2 innermost alpha-1,3-linked glucose residues from the Glc(2)Man(9)GlcNAc(2) oligosaccharide precursor of immature glycoproteins. Specifically required for the cleavage of the final glucose.</text>
</comment>
<comment type="subunit">
    <text>Heterodimer of a catalytic subunit alpha (ROT2) and a subunit beta (GTB1).</text>
</comment>
<comment type="interaction">
    <interactant intactId="EBI-37493">
        <id>Q04924</id>
    </interactant>
    <interactant intactId="EBI-21021">
        <id>P38138</id>
        <label>ROT2</label>
    </interactant>
    <organismsDiffer>false</organismsDiffer>
    <experiments>2</experiments>
</comment>
<comment type="subcellular location">
    <subcellularLocation>
        <location evidence="4 6">Endoplasmic reticulum</location>
    </subcellularLocation>
</comment>
<comment type="miscellaneous">
    <text evidence="5">Present with 9760 molecules/cell in log phase SD medium.</text>
</comment>
<sequence length="702" mass="79907">MVSMFSLFLLLIEQSPLVASLQQSQRHIVGVPWEKQHLYDSNEPDLTKWHCLNHEDIVLDISQINDGVCDCPDGSDEPGSAACVEDIFKSVAEGGGKVNKYFYCDNKGFIPRYIRKSEVADGICDCCDCSDELLSGYELFDAGSNCSQLKNEFDIMASKELSSYREGKEALEELERKYGTKEEAITRGNCLEEDKEKASAEIKVLSNRLSENRAKLEQLRGEYFNQLSHDPILYQFEQLNSTRLGSDILTSFTMVSRVSKGYQDIFKILSDLSEAYTPSLNDKVVNDNIKKFRKVRRRAEKAKINADSKIDDEQADNLYLYFTEEVPQIFLKRESENTLRYVIGKSNFVQALVEGKINYTNDILEYIREFRLIMDDISQNYNVNFQDAGVKSAVDSYKNYLGEYGELAELEPAHPSESLLRSLSEVTSFVNENAPKVLPPDAVESEQDTNSDHIGTSGDLRNKLKEILSKLNIFSSRKDLVSLEKRFRSCESQVSLLENELKQKMDYKKLLDETEDEGTNSTAGNLTELLELMGSQSYCLDDILDNYVYTICFQRPMTEGVIYQAEDKVDGKKVLIGRFKTSGFNVDLNMEKYAEHLKATYDEKSDLISNLAAIQDDDGNMQHYVFGNLNELNNGLVLEYENGDQCWNGPRRSATVFVRCSDKFKIRSVHEATKCNYIFDVVGPLGCNKTFEYEPPKFNLSE</sequence>
<organism>
    <name type="scientific">Saccharomyces cerevisiae (strain ATCC 204508 / S288c)</name>
    <name type="common">Baker's yeast</name>
    <dbReference type="NCBI Taxonomy" id="559292"/>
    <lineage>
        <taxon>Eukaryota</taxon>
        <taxon>Fungi</taxon>
        <taxon>Dikarya</taxon>
        <taxon>Ascomycota</taxon>
        <taxon>Saccharomycotina</taxon>
        <taxon>Saccharomycetes</taxon>
        <taxon>Saccharomycetales</taxon>
        <taxon>Saccharomycetaceae</taxon>
        <taxon>Saccharomyces</taxon>
    </lineage>
</organism>
<dbReference type="EMBL" id="Z48612">
    <property type="protein sequence ID" value="CAA88501.1"/>
    <property type="molecule type" value="Genomic_DNA"/>
</dbReference>
<dbReference type="EMBL" id="BK006938">
    <property type="protein sequence ID" value="DAA12063.1"/>
    <property type="molecule type" value="Genomic_DNA"/>
</dbReference>
<dbReference type="PIR" id="S59428">
    <property type="entry name" value="S59428"/>
</dbReference>
<dbReference type="RefSeq" id="NP_010507.3">
    <property type="nucleotide sequence ID" value="NM_001180529.3"/>
</dbReference>
<dbReference type="SMR" id="Q04924"/>
<dbReference type="BioGRID" id="32273">
    <property type="interactions" value="96"/>
</dbReference>
<dbReference type="ComplexPortal" id="CPX-417">
    <property type="entry name" value="Glucosidase II complex"/>
</dbReference>
<dbReference type="DIP" id="DIP-4429N"/>
<dbReference type="FunCoup" id="Q04924">
    <property type="interactions" value="678"/>
</dbReference>
<dbReference type="IntAct" id="Q04924">
    <property type="interactions" value="1"/>
</dbReference>
<dbReference type="MINT" id="Q04924"/>
<dbReference type="STRING" id="4932.YDR221W"/>
<dbReference type="GlyCosmos" id="Q04924">
    <property type="glycosylation" value="7 sites, No reported glycans"/>
</dbReference>
<dbReference type="GlyGen" id="Q04924">
    <property type="glycosylation" value="9 sites, 1 O-linked glycan (2 sites)"/>
</dbReference>
<dbReference type="iPTMnet" id="Q04924"/>
<dbReference type="PaxDb" id="4932-YDR221W"/>
<dbReference type="PeptideAtlas" id="Q04924"/>
<dbReference type="EnsemblFungi" id="YDR221W_mRNA">
    <property type="protein sequence ID" value="YDR221W"/>
    <property type="gene ID" value="YDR221W"/>
</dbReference>
<dbReference type="GeneID" id="851807"/>
<dbReference type="KEGG" id="sce:YDR221W"/>
<dbReference type="AGR" id="SGD:S000002629"/>
<dbReference type="SGD" id="S000002629">
    <property type="gene designation" value="GTB1"/>
</dbReference>
<dbReference type="VEuPathDB" id="FungiDB:YDR221W"/>
<dbReference type="eggNOG" id="KOG2397">
    <property type="taxonomic scope" value="Eukaryota"/>
</dbReference>
<dbReference type="GeneTree" id="ENSGT00510000047770"/>
<dbReference type="HOGENOM" id="CLU_419754_0_0_1"/>
<dbReference type="InParanoid" id="Q04924"/>
<dbReference type="OMA" id="CCDCSDE"/>
<dbReference type="OrthoDB" id="28322at2759"/>
<dbReference type="BioCyc" id="MetaCyc:G3O-29801-MONOMER"/>
<dbReference type="BioCyc" id="YEAST:G3O-29801-MONOMER"/>
<dbReference type="BioGRID-ORCS" id="851807">
    <property type="hits" value="0 hits in 10 CRISPR screens"/>
</dbReference>
<dbReference type="PRO" id="PR:Q04924"/>
<dbReference type="Proteomes" id="UP000002311">
    <property type="component" value="Chromosome IV"/>
</dbReference>
<dbReference type="RNAct" id="Q04924">
    <property type="molecule type" value="protein"/>
</dbReference>
<dbReference type="GO" id="GO:0005783">
    <property type="term" value="C:endoplasmic reticulum"/>
    <property type="evidence" value="ECO:0007005"/>
    <property type="project" value="SGD"/>
</dbReference>
<dbReference type="GO" id="GO:0005788">
    <property type="term" value="C:endoplasmic reticulum lumen"/>
    <property type="evidence" value="ECO:0000314"/>
    <property type="project" value="SGD"/>
</dbReference>
<dbReference type="GO" id="GO:0017177">
    <property type="term" value="C:glucosidase II complex"/>
    <property type="evidence" value="ECO:0000353"/>
    <property type="project" value="ComplexPortal"/>
</dbReference>
<dbReference type="GO" id="GO:0070880">
    <property type="term" value="P:fungal-type cell wall beta-glucan biosynthetic process"/>
    <property type="evidence" value="ECO:0000314"/>
    <property type="project" value="ComplexPortal"/>
</dbReference>
<dbReference type="GO" id="GO:0006491">
    <property type="term" value="P:N-glycan processing"/>
    <property type="evidence" value="ECO:0000314"/>
    <property type="project" value="ComplexPortal"/>
</dbReference>
<dbReference type="GO" id="GO:0000271">
    <property type="term" value="P:polysaccharide biosynthetic process"/>
    <property type="evidence" value="ECO:0000315"/>
    <property type="project" value="SGD"/>
</dbReference>
<dbReference type="Gene3D" id="2.70.130.10">
    <property type="entry name" value="Mannose-6-phosphate receptor binding domain"/>
    <property type="match status" value="1"/>
</dbReference>
<dbReference type="InterPro" id="IPR039794">
    <property type="entry name" value="Gtb1-like"/>
</dbReference>
<dbReference type="InterPro" id="IPR009011">
    <property type="entry name" value="Man6P_isomerase_rcpt-bd_dom_sf"/>
</dbReference>
<dbReference type="InterPro" id="IPR044865">
    <property type="entry name" value="MRH_dom"/>
</dbReference>
<dbReference type="InterPro" id="IPR036607">
    <property type="entry name" value="PRKCSH"/>
</dbReference>
<dbReference type="InterPro" id="IPR028146">
    <property type="entry name" value="PRKCSH_N"/>
</dbReference>
<dbReference type="PANTHER" id="PTHR12630:SF1">
    <property type="entry name" value="GLUCOSIDASE 2 SUBUNIT BETA"/>
    <property type="match status" value="1"/>
</dbReference>
<dbReference type="PANTHER" id="PTHR12630">
    <property type="entry name" value="N-LINKED OLIGOSACCHARIDE PROCESSING"/>
    <property type="match status" value="1"/>
</dbReference>
<dbReference type="Pfam" id="PF12999">
    <property type="entry name" value="PRKCSH-like"/>
    <property type="match status" value="1"/>
</dbReference>
<dbReference type="Pfam" id="PF13015">
    <property type="entry name" value="PRKCSH_1"/>
    <property type="match status" value="1"/>
</dbReference>
<dbReference type="SUPFAM" id="SSF50911">
    <property type="entry name" value="Mannose 6-phosphate receptor domain"/>
    <property type="match status" value="1"/>
</dbReference>
<dbReference type="PROSITE" id="PS51914">
    <property type="entry name" value="MRH"/>
    <property type="match status" value="1"/>
</dbReference>
<accession>Q04924</accession>
<accession>D6VSK3</accession>
<gene>
    <name type="primary">GTB1</name>
    <name type="ordered locus">YDR221W</name>
</gene>
<name>GLU2B_YEAST</name>
<protein>
    <recommendedName>
        <fullName>Glucosidase 2 subunit beta</fullName>
    </recommendedName>
    <alternativeName>
        <fullName>Alpha-glucosidase 2 subunit beta</fullName>
    </alternativeName>
    <alternativeName>
        <fullName>Alpha-glucosidase II subunit beta</fullName>
    </alternativeName>
    <alternativeName>
        <fullName>Glucosidase II subunit beta</fullName>
    </alternativeName>
</protein>